<comment type="function">
    <text>The biological activity of the toxin is produced by the A chain, which activates intracellular adenyl cyclase.</text>
</comment>
<comment type="subunit">
    <text>Heterohexamer of one A chain and of five B chains.</text>
</comment>
<comment type="similarity">
    <text evidence="2">Belongs to the enterotoxin A family.</text>
</comment>
<dbReference type="EMBL" id="JQ031711">
    <property type="protein sequence ID" value="AAA24093.1"/>
    <property type="molecule type" value="Genomic_DNA"/>
</dbReference>
<dbReference type="PIR" id="A29831">
    <property type="entry name" value="A29831"/>
</dbReference>
<dbReference type="RefSeq" id="WP_161622411.1">
    <property type="nucleotide sequence ID" value="NZ_CP041411.1"/>
</dbReference>
<dbReference type="SMR" id="P13810"/>
<dbReference type="GO" id="GO:0005615">
    <property type="term" value="C:extracellular space"/>
    <property type="evidence" value="ECO:0007669"/>
    <property type="project" value="InterPro"/>
</dbReference>
<dbReference type="GO" id="GO:0090729">
    <property type="term" value="F:toxin activity"/>
    <property type="evidence" value="ECO:0007669"/>
    <property type="project" value="UniProtKB-KW"/>
</dbReference>
<dbReference type="Gene3D" id="3.90.210.10">
    <property type="entry name" value="Heat-Labile Enterotoxin, subunit A"/>
    <property type="match status" value="1"/>
</dbReference>
<dbReference type="InterPro" id="IPR001144">
    <property type="entry name" value="Enterotoxin_A"/>
</dbReference>
<dbReference type="Pfam" id="PF01375">
    <property type="entry name" value="Enterotoxin_a"/>
    <property type="match status" value="1"/>
</dbReference>
<dbReference type="PRINTS" id="PR00771">
    <property type="entry name" value="ENTEROTOXINA"/>
</dbReference>
<dbReference type="SUPFAM" id="SSF56399">
    <property type="entry name" value="ADP-ribosylation"/>
    <property type="match status" value="1"/>
</dbReference>
<name>E2AA_ECOLX</name>
<keyword id="KW-1015">Disulfide bond</keyword>
<keyword id="KW-0260">Enterotoxin</keyword>
<keyword id="KW-0732">Signal</keyword>
<keyword id="KW-0800">Toxin</keyword>
<keyword id="KW-0843">Virulence</keyword>
<proteinExistence type="inferred from homology"/>
<accession>P13810</accession>
<protein>
    <recommendedName>
        <fullName>Heat-labile enterotoxin IIA, A chain</fullName>
        <shortName>LT-IIA</shortName>
    </recommendedName>
</protein>
<feature type="signal peptide">
    <location>
        <begin position="1"/>
        <end position="18"/>
    </location>
</feature>
<feature type="chain" id="PRO_0000019353" description="Heat-labile enterotoxin IIA, A chain">
    <location>
        <begin position="19"/>
        <end position="259"/>
    </location>
</feature>
<feature type="active site" evidence="1">
    <location>
        <position position="128"/>
    </location>
</feature>
<feature type="binding site" evidence="1">
    <location>
        <begin position="23"/>
        <end position="37"/>
    </location>
    <ligand>
        <name>NAD(+)</name>
        <dbReference type="ChEBI" id="CHEBI:57540"/>
    </ligand>
</feature>
<feature type="disulfide bond" evidence="1">
    <location>
        <begin position="203"/>
        <end position="215"/>
    </location>
</feature>
<sequence length="259" mass="29242">MIKHVLLFFVFISFSVSANDFFRADSRTPDEIRRAGGLLPRGQQEAYERGTPININLYEHARGTVTGNTRYNDGYVSTTVTLRQAHLIGQNILGSYNEYYIYVVAPAPNLFDVNGVLGRYSPYPSENEFAALGGIPLSQIIGWYRVSFGAIEGGMQRNRDYRGDLFRGLTVAPNEDGYQLAGFPSNFPAWREMPWSTFAPEQCVPNNKEFKGGVCISATNVLSKYDLMNFKKLLKRRLALTFFMSEDDFIGVHGERDEL</sequence>
<organism>
    <name type="scientific">Escherichia coli</name>
    <dbReference type="NCBI Taxonomy" id="562"/>
    <lineage>
        <taxon>Bacteria</taxon>
        <taxon>Pseudomonadati</taxon>
        <taxon>Pseudomonadota</taxon>
        <taxon>Gammaproteobacteria</taxon>
        <taxon>Enterobacterales</taxon>
        <taxon>Enterobacteriaceae</taxon>
        <taxon>Escherichia</taxon>
    </lineage>
</organism>
<reference key="1">
    <citation type="journal article" date="1987" name="J. Bacteriol.">
        <title>Genetics of type IIa heat-labile enterotoxin of Escherichia coli: operon fusions, nucleotide sequence, and hybridization studies.</title>
        <authorList>
            <person name="Pickett C.L."/>
            <person name="Weinstein D.L."/>
            <person name="Holmes R.K."/>
        </authorList>
    </citation>
    <scope>NUCLEOTIDE SEQUENCE [GENOMIC DNA]</scope>
    <source>
        <strain>SA53</strain>
    </source>
</reference>
<evidence type="ECO:0000250" key="1"/>
<evidence type="ECO:0000305" key="2"/>